<comment type="function">
    <text evidence="1">F(1)F(0) ATP synthase produces ATP from ADP in the presence of a proton or sodium gradient. F-type ATPases consist of two structural domains, F(1) containing the extramembraneous catalytic core and F(0) containing the membrane proton channel, linked together by a central stalk and a peripheral stalk. During catalysis, ATP synthesis in the catalytic domain of F(1) is coupled via a rotary mechanism of the central stalk subunits to proton translocation.</text>
</comment>
<comment type="function">
    <text evidence="1">This protein is part of the stalk that links CF(0) to CF(1). It either transmits conformational changes from CF(0) to CF(1) or is implicated in proton conduction.</text>
</comment>
<comment type="subunit">
    <text evidence="1">F-type ATPases have 2 components, F(1) - the catalytic core - and F(0) - the membrane proton channel. F(1) has five subunits: alpha(3), beta(3), gamma(1), delta(1), epsilon(1). F(0) has three main subunits: a(1), b(2) and c(10-14). The alpha and beta chains form an alternating ring which encloses part of the gamma chain. F(1) is attached to F(0) by a central stalk formed by the gamma and epsilon chains, while a peripheral stalk is formed by the delta and b chains.</text>
</comment>
<comment type="subcellular location">
    <subcellularLocation>
        <location evidence="1">Cell membrane</location>
        <topology evidence="1">Peripheral membrane protein</topology>
    </subcellularLocation>
</comment>
<comment type="similarity">
    <text evidence="1">Belongs to the ATPase delta chain family.</text>
</comment>
<accession>Q50328</accession>
<reference key="1">
    <citation type="journal article" date="1996" name="Nucleic Acids Res.">
        <title>Sequence analysis of 56 kb from the genome of the bacterium Mycoplasma pneumoniae comprising the dnaA region, the atp operon and a cluster of ribosomal protein genes.</title>
        <authorList>
            <person name="Hilbert H."/>
            <person name="Himmelreich R."/>
            <person name="Plagens H."/>
            <person name="Herrmann R."/>
        </authorList>
    </citation>
    <scope>NUCLEOTIDE SEQUENCE [GENOMIC DNA]</scope>
    <source>
        <strain>ATCC 29342 / M129 / Subtype 1</strain>
    </source>
</reference>
<reference key="2">
    <citation type="journal article" date="1996" name="Nucleic Acids Res.">
        <title>Complete sequence analysis of the genome of the bacterium Mycoplasma pneumoniae.</title>
        <authorList>
            <person name="Himmelreich R."/>
            <person name="Hilbert H."/>
            <person name="Plagens H."/>
            <person name="Pirkl E."/>
            <person name="Li B.-C."/>
            <person name="Herrmann R."/>
        </authorList>
    </citation>
    <scope>NUCLEOTIDE SEQUENCE [LARGE SCALE GENOMIC DNA]</scope>
    <source>
        <strain>ATCC 29342 / M129 / Subtype 1</strain>
    </source>
</reference>
<name>ATPD_MYCPN</name>
<dbReference type="EMBL" id="U43738">
    <property type="protein sequence ID" value="AAC43656.1"/>
    <property type="molecule type" value="Genomic_DNA"/>
</dbReference>
<dbReference type="EMBL" id="U00089">
    <property type="protein sequence ID" value="AAB95889.1"/>
    <property type="molecule type" value="Genomic_DNA"/>
</dbReference>
<dbReference type="PIR" id="S62846">
    <property type="entry name" value="S62846"/>
</dbReference>
<dbReference type="RefSeq" id="NP_110290.1">
    <property type="nucleotide sequence ID" value="NC_000912.1"/>
</dbReference>
<dbReference type="RefSeq" id="WP_010874958.1">
    <property type="nucleotide sequence ID" value="NZ_OU342337.1"/>
</dbReference>
<dbReference type="SMR" id="Q50328"/>
<dbReference type="STRING" id="272634.MPN_601"/>
<dbReference type="EnsemblBacteria" id="AAB95889">
    <property type="protein sequence ID" value="AAB95889"/>
    <property type="gene ID" value="MPN_601"/>
</dbReference>
<dbReference type="KEGG" id="mpn:MPN_601"/>
<dbReference type="PATRIC" id="fig|272634.6.peg.664"/>
<dbReference type="HOGENOM" id="CLU_085114_1_1_14"/>
<dbReference type="OrthoDB" id="400380at2"/>
<dbReference type="BioCyc" id="MetaCyc:MONOMER-541"/>
<dbReference type="BioCyc" id="MPNE272634:G1GJ3-976-MONOMER"/>
<dbReference type="Proteomes" id="UP000000808">
    <property type="component" value="Chromosome"/>
</dbReference>
<dbReference type="GO" id="GO:0005886">
    <property type="term" value="C:plasma membrane"/>
    <property type="evidence" value="ECO:0007669"/>
    <property type="project" value="UniProtKB-SubCell"/>
</dbReference>
<dbReference type="GO" id="GO:0045259">
    <property type="term" value="C:proton-transporting ATP synthase complex"/>
    <property type="evidence" value="ECO:0007669"/>
    <property type="project" value="UniProtKB-KW"/>
</dbReference>
<dbReference type="GO" id="GO:0046933">
    <property type="term" value="F:proton-transporting ATP synthase activity, rotational mechanism"/>
    <property type="evidence" value="ECO:0007669"/>
    <property type="project" value="UniProtKB-UniRule"/>
</dbReference>
<dbReference type="Gene3D" id="1.10.520.20">
    <property type="entry name" value="N-terminal domain of the delta subunit of the F1F0-ATP synthase"/>
    <property type="match status" value="1"/>
</dbReference>
<dbReference type="HAMAP" id="MF_01416">
    <property type="entry name" value="ATP_synth_delta_bact"/>
    <property type="match status" value="1"/>
</dbReference>
<dbReference type="InterPro" id="IPR026015">
    <property type="entry name" value="ATP_synth_OSCP/delta_N_sf"/>
</dbReference>
<dbReference type="InterPro" id="IPR020781">
    <property type="entry name" value="ATPase_OSCP/d_CS"/>
</dbReference>
<dbReference type="InterPro" id="IPR000711">
    <property type="entry name" value="ATPase_OSCP/dsu"/>
</dbReference>
<dbReference type="NCBIfam" id="TIGR01145">
    <property type="entry name" value="ATP_synt_delta"/>
    <property type="match status" value="1"/>
</dbReference>
<dbReference type="PANTHER" id="PTHR11910">
    <property type="entry name" value="ATP SYNTHASE DELTA CHAIN"/>
    <property type="match status" value="1"/>
</dbReference>
<dbReference type="Pfam" id="PF00213">
    <property type="entry name" value="OSCP"/>
    <property type="match status" value="1"/>
</dbReference>
<dbReference type="PRINTS" id="PR00125">
    <property type="entry name" value="ATPASEDELTA"/>
</dbReference>
<dbReference type="SUPFAM" id="SSF47928">
    <property type="entry name" value="N-terminal domain of the delta subunit of the F1F0-ATP synthase"/>
    <property type="match status" value="1"/>
</dbReference>
<dbReference type="PROSITE" id="PS00389">
    <property type="entry name" value="ATPASE_DELTA"/>
    <property type="match status" value="1"/>
</dbReference>
<organism>
    <name type="scientific">Mycoplasma pneumoniae (strain ATCC 29342 / M129 / Subtype 1)</name>
    <name type="common">Mycoplasmoides pneumoniae</name>
    <dbReference type="NCBI Taxonomy" id="272634"/>
    <lineage>
        <taxon>Bacteria</taxon>
        <taxon>Bacillati</taxon>
        <taxon>Mycoplasmatota</taxon>
        <taxon>Mycoplasmoidales</taxon>
        <taxon>Mycoplasmoidaceae</taxon>
        <taxon>Mycoplasmoides</taxon>
    </lineage>
</organism>
<feature type="chain" id="PRO_0000193469" description="ATP synthase subunit delta">
    <location>
        <begin position="1"/>
        <end position="178"/>
    </location>
</feature>
<sequence length="178" mass="20740">MINAQAFGMALFQLSEEEKKVKKVYDQSHDFLKLARNFKDGSLAALLNAYTLTKKEKLKLIDKLFKNHFCDLFVDFLKTIVLKGYFNLVEQALKYFFDCVENEKHVQFIRIITAFELSAPQLKRIVAAMEKKLNSKIVYKTEIDKSLISGIRIESSAQLFEKNIRDQLSRLMEQFKGN</sequence>
<protein>
    <recommendedName>
        <fullName evidence="1">ATP synthase subunit delta</fullName>
    </recommendedName>
    <alternativeName>
        <fullName evidence="1">ATP synthase F(1) sector subunit delta</fullName>
    </alternativeName>
    <alternativeName>
        <fullName evidence="1">F-type ATPase subunit delta</fullName>
        <shortName evidence="1">F-ATPase subunit delta</shortName>
    </alternativeName>
</protein>
<gene>
    <name evidence="1" type="primary">atpH</name>
    <name type="ordered locus">MPN_601</name>
    <name type="ORF">MP241</name>
</gene>
<proteinExistence type="inferred from homology"/>
<evidence type="ECO:0000255" key="1">
    <source>
        <dbReference type="HAMAP-Rule" id="MF_01416"/>
    </source>
</evidence>
<keyword id="KW-0066">ATP synthesis</keyword>
<keyword id="KW-1003">Cell membrane</keyword>
<keyword id="KW-0139">CF(1)</keyword>
<keyword id="KW-0375">Hydrogen ion transport</keyword>
<keyword id="KW-0406">Ion transport</keyword>
<keyword id="KW-0472">Membrane</keyword>
<keyword id="KW-1185">Reference proteome</keyword>
<keyword id="KW-0813">Transport</keyword>